<accession>Q8S983</accession>
<accession>Q0J9A4</accession>
<accession>Q7XM09</accession>
<evidence type="ECO:0000250" key="1"/>
<evidence type="ECO:0000255" key="2">
    <source>
        <dbReference type="PROSITE-ProRule" id="PRU00326"/>
    </source>
</evidence>
<evidence type="ECO:0000255" key="3">
    <source>
        <dbReference type="PROSITE-ProRule" id="PRU01081"/>
    </source>
</evidence>
<evidence type="ECO:0000256" key="4">
    <source>
        <dbReference type="SAM" id="MobiDB-lite"/>
    </source>
</evidence>
<evidence type="ECO:0000269" key="5">
    <source>
    </source>
</evidence>
<evidence type="ECO:0000305" key="6"/>
<sequence length="955" mass="105224">MASSQEKAKTGVLRNAAALLDEMQLMGETQGAKKVINSELWHACAGPLVCLPQRGSLVYYFPQGHSEQVAATTRKIPNSRIPNYPNLPSQLLCQVHNITLHADKDTDEVYAQMTLQPVNSETDVFPIPTLGAYTKSKHPTEYFCKNLTASDTSTHGGFSVPRRAAEKLFPQLDYSMQPPNQELIVRDLHDNMWTFRHIYRGQPKRHLLTTGWSLFVGAKRLKAGDSVLFIRDEKSQLLLGVRRATRQQTMLSSSVLSTDSMHIGVLAAAAHAASSGSSFTIYYNPRTSPSPFVIPVARYNKATYMQPSVGMRFAMMFETEESSKRRYTGTVVGISDYDPMRWPNSKWRNLQVEWDEHGYGERPERVSIWDIETPENTLVFPSSTLNSKRQCLPGYGVSVPGMEIGSANMSSFPRAQGNPYGSLQHIPAVGSELAIMLLNQSGQTLGSPLSFHQSSYSSIIQNVKQNYIPPLTVSTSACLTKQESLPSDDAQHQFHMANMQNGDLEGSEVQPVIDSISESKLNATSRDPRNTDSYTSRSTSEQNSKGEPRGKTRRSKKGLPHKTVSEKSDLSSAPSWICDNQQVGLESKLVGCDEQVNCGNIEDSSGALTQGNFVGQPHGHQVEQKGVLSPPKVESSKSPDGGKSVNSFPNQGCFSQFIDGLDWMTQPSYYQDSNVIQPAGVSENIFSSSADIPPSMIADTMETFQASCLSDCLPNSIQEFISSPDLNSLTFLSPDMQNLEVQLQHDGSNLPSTSNSFVQMSFSEESASQSANLSGLHMESTHRSINTTSCSQPMSTGGFDAGMYSKLPRLKESQILSLPEIHTNSMGTSACSMDATEYSLDRSAKPMKPPVRTYTKVQKQGSVGRSIDVTGFRNYHELRSAIACMFGLQGKLEHPGSSEWKLVYVDYENDVLLVGDDPWEEFINCVRCIRILSPSEVQQMSENGMHVLNDCIQAA</sequence>
<organism>
    <name type="scientific">Oryza sativa subsp. japonica</name>
    <name type="common">Rice</name>
    <dbReference type="NCBI Taxonomy" id="39947"/>
    <lineage>
        <taxon>Eukaryota</taxon>
        <taxon>Viridiplantae</taxon>
        <taxon>Streptophyta</taxon>
        <taxon>Embryophyta</taxon>
        <taxon>Tracheophyta</taxon>
        <taxon>Spermatophyta</taxon>
        <taxon>Magnoliopsida</taxon>
        <taxon>Liliopsida</taxon>
        <taxon>Poales</taxon>
        <taxon>Poaceae</taxon>
        <taxon>BOP clade</taxon>
        <taxon>Oryzoideae</taxon>
        <taxon>Oryzeae</taxon>
        <taxon>Oryzinae</taxon>
        <taxon>Oryza</taxon>
        <taxon>Oryza sativa</taxon>
    </lineage>
</organism>
<keyword id="KW-0927">Auxin signaling pathway</keyword>
<keyword id="KW-0238">DNA-binding</keyword>
<keyword id="KW-0539">Nucleus</keyword>
<keyword id="KW-1185">Reference proteome</keyword>
<keyword id="KW-0804">Transcription</keyword>
<keyword id="KW-0805">Transcription regulation</keyword>
<feature type="chain" id="PRO_0000299267" description="Auxin response factor 11">
    <location>
        <begin position="1"/>
        <end position="955"/>
    </location>
</feature>
<feature type="domain" description="PB1" evidence="3">
    <location>
        <begin position="852"/>
        <end position="936"/>
    </location>
</feature>
<feature type="DNA-binding region" description="TF-B3" evidence="2">
    <location>
        <begin position="143"/>
        <end position="245"/>
    </location>
</feature>
<feature type="region of interest" description="Disordered" evidence="4">
    <location>
        <begin position="518"/>
        <end position="573"/>
    </location>
</feature>
<feature type="region of interest" description="Disordered" evidence="4">
    <location>
        <begin position="609"/>
        <end position="646"/>
    </location>
</feature>
<feature type="compositionally biased region" description="Polar residues" evidence="4">
    <location>
        <begin position="518"/>
        <end position="543"/>
    </location>
</feature>
<feature type="compositionally biased region" description="Basic residues" evidence="4">
    <location>
        <begin position="551"/>
        <end position="560"/>
    </location>
</feature>
<gene>
    <name type="primary">ARF11</name>
    <name type="synonym">ARF5</name>
    <name type="synonym">MP</name>
    <name type="ordered locus">Os04g0664400</name>
    <name type="ordered locus">LOC_Os04g56850</name>
    <name type="ORF">OSJNBa0084K01.22</name>
</gene>
<reference key="1">
    <citation type="journal article" date="2001" name="Genes Genet. Syst.">
        <title>Auxin response factor family in rice.</title>
        <authorList>
            <person name="Sato Y."/>
            <person name="Nishimura A."/>
            <person name="Ito M."/>
            <person name="Ashikari M."/>
            <person name="Hirano H.-Y."/>
            <person name="Matsuoka M."/>
        </authorList>
    </citation>
    <scope>NUCLEOTIDE SEQUENCE [MRNA]</scope>
    <source>
        <strain>cv. Nipponbare</strain>
    </source>
</reference>
<reference key="2">
    <citation type="journal article" date="2002" name="Nature">
        <title>Sequence and analysis of rice chromosome 4.</title>
        <authorList>
            <person name="Feng Q."/>
            <person name="Zhang Y."/>
            <person name="Hao P."/>
            <person name="Wang S."/>
            <person name="Fu G."/>
            <person name="Huang Y."/>
            <person name="Li Y."/>
            <person name="Zhu J."/>
            <person name="Liu Y."/>
            <person name="Hu X."/>
            <person name="Jia P."/>
            <person name="Zhang Y."/>
            <person name="Zhao Q."/>
            <person name="Ying K."/>
            <person name="Yu S."/>
            <person name="Tang Y."/>
            <person name="Weng Q."/>
            <person name="Zhang L."/>
            <person name="Lu Y."/>
            <person name="Mu J."/>
            <person name="Lu Y."/>
            <person name="Zhang L.S."/>
            <person name="Yu Z."/>
            <person name="Fan D."/>
            <person name="Liu X."/>
            <person name="Lu T."/>
            <person name="Li C."/>
            <person name="Wu Y."/>
            <person name="Sun T."/>
            <person name="Lei H."/>
            <person name="Li T."/>
            <person name="Hu H."/>
            <person name="Guan J."/>
            <person name="Wu M."/>
            <person name="Zhang R."/>
            <person name="Zhou B."/>
            <person name="Chen Z."/>
            <person name="Chen L."/>
            <person name="Jin Z."/>
            <person name="Wang R."/>
            <person name="Yin H."/>
            <person name="Cai Z."/>
            <person name="Ren S."/>
            <person name="Lv G."/>
            <person name="Gu W."/>
            <person name="Zhu G."/>
            <person name="Tu Y."/>
            <person name="Jia J."/>
            <person name="Zhang Y."/>
            <person name="Chen J."/>
            <person name="Kang H."/>
            <person name="Chen X."/>
            <person name="Shao C."/>
            <person name="Sun Y."/>
            <person name="Hu Q."/>
            <person name="Zhang X."/>
            <person name="Zhang W."/>
            <person name="Wang L."/>
            <person name="Ding C."/>
            <person name="Sheng H."/>
            <person name="Gu J."/>
            <person name="Chen S."/>
            <person name="Ni L."/>
            <person name="Zhu F."/>
            <person name="Chen W."/>
            <person name="Lan L."/>
            <person name="Lai Y."/>
            <person name="Cheng Z."/>
            <person name="Gu M."/>
            <person name="Jiang J."/>
            <person name="Li J."/>
            <person name="Hong G."/>
            <person name="Xue Y."/>
            <person name="Han B."/>
        </authorList>
    </citation>
    <scope>NUCLEOTIDE SEQUENCE [LARGE SCALE GENOMIC DNA]</scope>
    <source>
        <strain>cv. Nipponbare</strain>
    </source>
</reference>
<reference key="3">
    <citation type="journal article" date="2005" name="Nature">
        <title>The map-based sequence of the rice genome.</title>
        <authorList>
            <consortium name="International rice genome sequencing project (IRGSP)"/>
        </authorList>
    </citation>
    <scope>NUCLEOTIDE SEQUENCE [LARGE SCALE GENOMIC DNA]</scope>
    <source>
        <strain>cv. Nipponbare</strain>
    </source>
</reference>
<reference key="4">
    <citation type="journal article" date="2008" name="Nucleic Acids Res.">
        <title>The rice annotation project database (RAP-DB): 2008 update.</title>
        <authorList>
            <consortium name="The rice annotation project (RAP)"/>
        </authorList>
    </citation>
    <scope>GENOME REANNOTATION</scope>
    <source>
        <strain>cv. Nipponbare</strain>
    </source>
</reference>
<reference key="5">
    <citation type="journal article" date="2013" name="Rice">
        <title>Improvement of the Oryza sativa Nipponbare reference genome using next generation sequence and optical map data.</title>
        <authorList>
            <person name="Kawahara Y."/>
            <person name="de la Bastide M."/>
            <person name="Hamilton J.P."/>
            <person name="Kanamori H."/>
            <person name="McCombie W.R."/>
            <person name="Ouyang S."/>
            <person name="Schwartz D.C."/>
            <person name="Tanaka T."/>
            <person name="Wu J."/>
            <person name="Zhou S."/>
            <person name="Childs K.L."/>
            <person name="Davidson R.M."/>
            <person name="Lin H."/>
            <person name="Quesada-Ocampo L."/>
            <person name="Vaillancourt B."/>
            <person name="Sakai H."/>
            <person name="Lee S.S."/>
            <person name="Kim J."/>
            <person name="Numa H."/>
            <person name="Itoh T."/>
            <person name="Buell C.R."/>
            <person name="Matsumoto T."/>
        </authorList>
    </citation>
    <scope>GENOME REANNOTATION</scope>
    <source>
        <strain>cv. Nipponbare</strain>
    </source>
</reference>
<reference key="6">
    <citation type="journal article" date="2007" name="Gene">
        <title>Genome-wide analysis of the auxin response factors (ARF) gene family in rice (Oryza sativa).</title>
        <authorList>
            <person name="Wang D."/>
            <person name="Pei K."/>
            <person name="Fu Y."/>
            <person name="Sun Z."/>
            <person name="Li S."/>
            <person name="Liu H."/>
            <person name="Tang K."/>
            <person name="Han B."/>
            <person name="Tao Y."/>
        </authorList>
    </citation>
    <scope>GENE FAMILY</scope>
    <scope>TISSUE SPECIFICITY</scope>
    <scope>NOMENCLATURE</scope>
</reference>
<proteinExistence type="evidence at transcript level"/>
<dbReference type="EMBL" id="AB071292">
    <property type="protein sequence ID" value="BAB85912.1"/>
    <property type="molecule type" value="mRNA"/>
</dbReference>
<dbReference type="EMBL" id="AL606999">
    <property type="protein sequence ID" value="CAE04850.2"/>
    <property type="status" value="ALT_SEQ"/>
    <property type="molecule type" value="Genomic_DNA"/>
</dbReference>
<dbReference type="EMBL" id="AP008210">
    <property type="protein sequence ID" value="BAF16083.2"/>
    <property type="molecule type" value="Genomic_DNA"/>
</dbReference>
<dbReference type="EMBL" id="AP014960">
    <property type="status" value="NOT_ANNOTATED_CDS"/>
    <property type="molecule type" value="Genomic_DNA"/>
</dbReference>
<dbReference type="SMR" id="Q8S983"/>
<dbReference type="FunCoup" id="Q8S983">
    <property type="interactions" value="1713"/>
</dbReference>
<dbReference type="STRING" id="39947.Q8S983"/>
<dbReference type="PaxDb" id="39947-Q8S983"/>
<dbReference type="EnsemblPlants" id="Os04t0664400-02">
    <property type="protein sequence ID" value="Os04t0664400-02"/>
    <property type="gene ID" value="Os04g0664400"/>
</dbReference>
<dbReference type="Gramene" id="Os04t0664400-02">
    <property type="protein sequence ID" value="Os04t0664400-02"/>
    <property type="gene ID" value="Os04g0664400"/>
</dbReference>
<dbReference type="KEGG" id="dosa:Os04g0664400"/>
<dbReference type="eggNOG" id="ENOG502QQ0Y">
    <property type="taxonomic scope" value="Eukaryota"/>
</dbReference>
<dbReference type="InParanoid" id="Q8S983"/>
<dbReference type="OrthoDB" id="2016915at2759"/>
<dbReference type="PlantReactome" id="R-OSA-5608118">
    <property type="pathway name" value="Auxin signalling"/>
</dbReference>
<dbReference type="Proteomes" id="UP000000763">
    <property type="component" value="Chromosome 4"/>
</dbReference>
<dbReference type="Proteomes" id="UP000059680">
    <property type="component" value="Chromosome 4"/>
</dbReference>
<dbReference type="ExpressionAtlas" id="Q8S983">
    <property type="expression patterns" value="baseline and differential"/>
</dbReference>
<dbReference type="GO" id="GO:0005634">
    <property type="term" value="C:nucleus"/>
    <property type="evidence" value="ECO:0007669"/>
    <property type="project" value="UniProtKB-SubCell"/>
</dbReference>
<dbReference type="GO" id="GO:0042802">
    <property type="term" value="F:identical protein binding"/>
    <property type="evidence" value="ECO:0007669"/>
    <property type="project" value="EnsemblPlants"/>
</dbReference>
<dbReference type="GO" id="GO:0000976">
    <property type="term" value="F:transcription cis-regulatory region binding"/>
    <property type="evidence" value="ECO:0007669"/>
    <property type="project" value="EnsemblPlants"/>
</dbReference>
<dbReference type="GO" id="GO:0009734">
    <property type="term" value="P:auxin-activated signaling pathway"/>
    <property type="evidence" value="ECO:0007669"/>
    <property type="project" value="UniProtKB-KW"/>
</dbReference>
<dbReference type="GO" id="GO:0009908">
    <property type="term" value="P:flower development"/>
    <property type="evidence" value="ECO:0007669"/>
    <property type="project" value="EnsemblPlants"/>
</dbReference>
<dbReference type="GO" id="GO:0010305">
    <property type="term" value="P:leaf vascular tissue pattern formation"/>
    <property type="evidence" value="ECO:0007669"/>
    <property type="project" value="EnsemblPlants"/>
</dbReference>
<dbReference type="GO" id="GO:0009942">
    <property type="term" value="P:longitudinal axis specification"/>
    <property type="evidence" value="ECO:0007669"/>
    <property type="project" value="EnsemblPlants"/>
</dbReference>
<dbReference type="GO" id="GO:0048507">
    <property type="term" value="P:meristem development"/>
    <property type="evidence" value="ECO:0007669"/>
    <property type="project" value="EnsemblPlants"/>
</dbReference>
<dbReference type="GO" id="GO:0006355">
    <property type="term" value="P:regulation of DNA-templated transcription"/>
    <property type="evidence" value="ECO:0007669"/>
    <property type="project" value="EnsemblPlants"/>
</dbReference>
<dbReference type="GO" id="GO:0048364">
    <property type="term" value="P:root development"/>
    <property type="evidence" value="ECO:0007669"/>
    <property type="project" value="EnsemblPlants"/>
</dbReference>
<dbReference type="CDD" id="cd10017">
    <property type="entry name" value="B3_DNA"/>
    <property type="match status" value="1"/>
</dbReference>
<dbReference type="FunFam" id="2.30.30.1040:FF:000001">
    <property type="entry name" value="Auxin response factor"/>
    <property type="match status" value="1"/>
</dbReference>
<dbReference type="FunFam" id="2.40.330.10:FF:000001">
    <property type="entry name" value="Auxin response factor"/>
    <property type="match status" value="1"/>
</dbReference>
<dbReference type="FunFam" id="3.10.20.90:FF:000047">
    <property type="entry name" value="Auxin response factor"/>
    <property type="match status" value="1"/>
</dbReference>
<dbReference type="Gene3D" id="2.30.30.1040">
    <property type="match status" value="1"/>
</dbReference>
<dbReference type="Gene3D" id="2.40.330.10">
    <property type="entry name" value="DNA-binding pseudobarrel domain"/>
    <property type="match status" value="1"/>
</dbReference>
<dbReference type="Gene3D" id="3.10.20.90">
    <property type="entry name" value="Phosphatidylinositol 3-kinase Catalytic Subunit, Chain A, domain 1"/>
    <property type="match status" value="1"/>
</dbReference>
<dbReference type="InterPro" id="IPR010525">
    <property type="entry name" value="ARF_dom"/>
</dbReference>
<dbReference type="InterPro" id="IPR044835">
    <property type="entry name" value="ARF_plant"/>
</dbReference>
<dbReference type="InterPro" id="IPR033389">
    <property type="entry name" value="AUX/IAA_dom"/>
</dbReference>
<dbReference type="InterPro" id="IPR003340">
    <property type="entry name" value="B3_DNA-bd"/>
</dbReference>
<dbReference type="InterPro" id="IPR015300">
    <property type="entry name" value="DNA-bd_pseudobarrel_sf"/>
</dbReference>
<dbReference type="InterPro" id="IPR053793">
    <property type="entry name" value="PB1-like"/>
</dbReference>
<dbReference type="PANTHER" id="PTHR31384">
    <property type="entry name" value="AUXIN RESPONSE FACTOR 4-RELATED"/>
    <property type="match status" value="1"/>
</dbReference>
<dbReference type="PANTHER" id="PTHR31384:SF10">
    <property type="entry name" value="AUXIN RESPONSE FACTOR 5"/>
    <property type="match status" value="1"/>
</dbReference>
<dbReference type="Pfam" id="PF06507">
    <property type="entry name" value="ARF_AD"/>
    <property type="match status" value="1"/>
</dbReference>
<dbReference type="Pfam" id="PF02309">
    <property type="entry name" value="AUX_IAA"/>
    <property type="match status" value="1"/>
</dbReference>
<dbReference type="Pfam" id="PF02362">
    <property type="entry name" value="B3"/>
    <property type="match status" value="1"/>
</dbReference>
<dbReference type="SMART" id="SM01019">
    <property type="entry name" value="B3"/>
    <property type="match status" value="1"/>
</dbReference>
<dbReference type="SUPFAM" id="SSF54277">
    <property type="entry name" value="CAD &amp; PB1 domains"/>
    <property type="match status" value="1"/>
</dbReference>
<dbReference type="SUPFAM" id="SSF101936">
    <property type="entry name" value="DNA-binding pseudobarrel domain"/>
    <property type="match status" value="1"/>
</dbReference>
<dbReference type="PROSITE" id="PS50863">
    <property type="entry name" value="B3"/>
    <property type="match status" value="1"/>
</dbReference>
<dbReference type="PROSITE" id="PS51745">
    <property type="entry name" value="PB1"/>
    <property type="match status" value="1"/>
</dbReference>
<comment type="function">
    <text>Auxin response factors (ARFs) are transcriptional factors that bind specifically to the DNA sequence 5'-TGTCTC-3' found in the auxin-responsive promoter elements (AuxREs).</text>
</comment>
<comment type="subunit">
    <text evidence="1">Homodimers and heterodimers.</text>
</comment>
<comment type="subcellular location">
    <subcellularLocation>
        <location evidence="2">Nucleus</location>
    </subcellularLocation>
</comment>
<comment type="tissue specificity">
    <text evidence="5">Expressed in roots, culms, leaves and young panicles.</text>
</comment>
<comment type="domain">
    <text>Interactions between auxin response factors (ARFs) and Aux/IAA proteins occur through their C-terminal dimerization domains III and IV.</text>
</comment>
<comment type="similarity">
    <text evidence="6">Belongs to the ARF family.</text>
</comment>
<comment type="sequence caution" evidence="6">
    <conflict type="erroneous gene model prediction">
        <sequence resource="EMBL-CDS" id="CAE04850"/>
    </conflict>
</comment>
<name>ARFK_ORYSJ</name>
<protein>
    <recommendedName>
        <fullName>Auxin response factor 11</fullName>
    </recommendedName>
    <alternativeName>
        <fullName>OsARF5</fullName>
    </alternativeName>
    <alternativeName>
        <fullName>OsMP</fullName>
    </alternativeName>
    <alternativeName>
        <fullName>Protein MONOPTEROS-like</fullName>
    </alternativeName>
</protein>